<keyword id="KW-0030">Aminoacyl-tRNA synthetase</keyword>
<keyword id="KW-0067">ATP-binding</keyword>
<keyword id="KW-0963">Cytoplasm</keyword>
<keyword id="KW-0436">Ligase</keyword>
<keyword id="KW-0547">Nucleotide-binding</keyword>
<keyword id="KW-0648">Protein biosynthesis</keyword>
<feature type="chain" id="PRO_1000071632" description="Serine--tRNA ligase">
    <location>
        <begin position="1"/>
        <end position="411"/>
    </location>
</feature>
<feature type="binding site" evidence="1">
    <location>
        <begin position="226"/>
        <end position="228"/>
    </location>
    <ligand>
        <name>L-serine</name>
        <dbReference type="ChEBI" id="CHEBI:33384"/>
    </ligand>
</feature>
<feature type="binding site" evidence="1">
    <location>
        <begin position="257"/>
        <end position="259"/>
    </location>
    <ligand>
        <name>ATP</name>
        <dbReference type="ChEBI" id="CHEBI:30616"/>
    </ligand>
</feature>
<feature type="binding site" evidence="1">
    <location>
        <position position="280"/>
    </location>
    <ligand>
        <name>L-serine</name>
        <dbReference type="ChEBI" id="CHEBI:33384"/>
    </ligand>
</feature>
<feature type="binding site" evidence="1">
    <location>
        <begin position="344"/>
        <end position="347"/>
    </location>
    <ligand>
        <name>ATP</name>
        <dbReference type="ChEBI" id="CHEBI:30616"/>
    </ligand>
</feature>
<feature type="binding site" evidence="1">
    <location>
        <position position="379"/>
    </location>
    <ligand>
        <name>L-serine</name>
        <dbReference type="ChEBI" id="CHEBI:33384"/>
    </ligand>
</feature>
<gene>
    <name evidence="1" type="primary">serS</name>
    <name type="ordered locus">C8J_0364</name>
</gene>
<comment type="function">
    <text evidence="1">Catalyzes the attachment of serine to tRNA(Ser). Is also able to aminoacylate tRNA(Sec) with serine, to form the misacylated tRNA L-seryl-tRNA(Sec), which will be further converted into selenocysteinyl-tRNA(Sec).</text>
</comment>
<comment type="catalytic activity">
    <reaction evidence="1">
        <text>tRNA(Ser) + L-serine + ATP = L-seryl-tRNA(Ser) + AMP + diphosphate + H(+)</text>
        <dbReference type="Rhea" id="RHEA:12292"/>
        <dbReference type="Rhea" id="RHEA-COMP:9669"/>
        <dbReference type="Rhea" id="RHEA-COMP:9703"/>
        <dbReference type="ChEBI" id="CHEBI:15378"/>
        <dbReference type="ChEBI" id="CHEBI:30616"/>
        <dbReference type="ChEBI" id="CHEBI:33019"/>
        <dbReference type="ChEBI" id="CHEBI:33384"/>
        <dbReference type="ChEBI" id="CHEBI:78442"/>
        <dbReference type="ChEBI" id="CHEBI:78533"/>
        <dbReference type="ChEBI" id="CHEBI:456215"/>
        <dbReference type="EC" id="6.1.1.11"/>
    </reaction>
</comment>
<comment type="catalytic activity">
    <reaction evidence="1">
        <text>tRNA(Sec) + L-serine + ATP = L-seryl-tRNA(Sec) + AMP + diphosphate + H(+)</text>
        <dbReference type="Rhea" id="RHEA:42580"/>
        <dbReference type="Rhea" id="RHEA-COMP:9742"/>
        <dbReference type="Rhea" id="RHEA-COMP:10128"/>
        <dbReference type="ChEBI" id="CHEBI:15378"/>
        <dbReference type="ChEBI" id="CHEBI:30616"/>
        <dbReference type="ChEBI" id="CHEBI:33019"/>
        <dbReference type="ChEBI" id="CHEBI:33384"/>
        <dbReference type="ChEBI" id="CHEBI:78442"/>
        <dbReference type="ChEBI" id="CHEBI:78533"/>
        <dbReference type="ChEBI" id="CHEBI:456215"/>
        <dbReference type="EC" id="6.1.1.11"/>
    </reaction>
</comment>
<comment type="pathway">
    <text evidence="1">Aminoacyl-tRNA biosynthesis; selenocysteinyl-tRNA(Sec) biosynthesis; L-seryl-tRNA(Sec) from L-serine and tRNA(Sec): step 1/1.</text>
</comment>
<comment type="subunit">
    <text evidence="1">Homodimer. The tRNA molecule binds across the dimer.</text>
</comment>
<comment type="subcellular location">
    <subcellularLocation>
        <location evidence="1">Cytoplasm</location>
    </subcellularLocation>
</comment>
<comment type="domain">
    <text evidence="1">Consists of two distinct domains, a catalytic core and a N-terminal extension that is involved in tRNA binding.</text>
</comment>
<comment type="similarity">
    <text evidence="1">Belongs to the class-II aminoacyl-tRNA synthetase family. Type-1 seryl-tRNA synthetase subfamily.</text>
</comment>
<name>SYS_CAMJ8</name>
<dbReference type="EC" id="6.1.1.11" evidence="1"/>
<dbReference type="EMBL" id="CP000814">
    <property type="protein sequence ID" value="ABV51963.1"/>
    <property type="molecule type" value="Genomic_DNA"/>
</dbReference>
<dbReference type="RefSeq" id="WP_002865890.1">
    <property type="nucleotide sequence ID" value="NC_009839.1"/>
</dbReference>
<dbReference type="SMR" id="A8FKH6"/>
<dbReference type="KEGG" id="cju:C8J_0364"/>
<dbReference type="HOGENOM" id="CLU_023797_1_1_7"/>
<dbReference type="UniPathway" id="UPA00906">
    <property type="reaction ID" value="UER00895"/>
</dbReference>
<dbReference type="GO" id="GO:0005737">
    <property type="term" value="C:cytoplasm"/>
    <property type="evidence" value="ECO:0007669"/>
    <property type="project" value="UniProtKB-SubCell"/>
</dbReference>
<dbReference type="GO" id="GO:0005524">
    <property type="term" value="F:ATP binding"/>
    <property type="evidence" value="ECO:0007669"/>
    <property type="project" value="UniProtKB-UniRule"/>
</dbReference>
<dbReference type="GO" id="GO:0004828">
    <property type="term" value="F:serine-tRNA ligase activity"/>
    <property type="evidence" value="ECO:0007669"/>
    <property type="project" value="UniProtKB-UniRule"/>
</dbReference>
<dbReference type="GO" id="GO:0016260">
    <property type="term" value="P:selenocysteine biosynthetic process"/>
    <property type="evidence" value="ECO:0007669"/>
    <property type="project" value="UniProtKB-UniRule"/>
</dbReference>
<dbReference type="GO" id="GO:0006434">
    <property type="term" value="P:seryl-tRNA aminoacylation"/>
    <property type="evidence" value="ECO:0007669"/>
    <property type="project" value="UniProtKB-UniRule"/>
</dbReference>
<dbReference type="CDD" id="cd00770">
    <property type="entry name" value="SerRS_core"/>
    <property type="match status" value="1"/>
</dbReference>
<dbReference type="Gene3D" id="3.30.930.10">
    <property type="entry name" value="Bira Bifunctional Protein, Domain 2"/>
    <property type="match status" value="1"/>
</dbReference>
<dbReference type="Gene3D" id="1.10.287.40">
    <property type="entry name" value="Serine-tRNA synthetase, tRNA binding domain"/>
    <property type="match status" value="1"/>
</dbReference>
<dbReference type="HAMAP" id="MF_00176">
    <property type="entry name" value="Ser_tRNA_synth_type1"/>
    <property type="match status" value="1"/>
</dbReference>
<dbReference type="InterPro" id="IPR002314">
    <property type="entry name" value="aa-tRNA-synt_IIb"/>
</dbReference>
<dbReference type="InterPro" id="IPR006195">
    <property type="entry name" value="aa-tRNA-synth_II"/>
</dbReference>
<dbReference type="InterPro" id="IPR045864">
    <property type="entry name" value="aa-tRNA-synth_II/BPL/LPL"/>
</dbReference>
<dbReference type="InterPro" id="IPR002317">
    <property type="entry name" value="Ser-tRNA-ligase_type_1"/>
</dbReference>
<dbReference type="InterPro" id="IPR015866">
    <property type="entry name" value="Ser-tRNA-synth_1_N"/>
</dbReference>
<dbReference type="InterPro" id="IPR042103">
    <property type="entry name" value="SerRS_1_N_sf"/>
</dbReference>
<dbReference type="InterPro" id="IPR033729">
    <property type="entry name" value="SerRS_core"/>
</dbReference>
<dbReference type="InterPro" id="IPR010978">
    <property type="entry name" value="tRNA-bd_arm"/>
</dbReference>
<dbReference type="NCBIfam" id="TIGR00414">
    <property type="entry name" value="serS"/>
    <property type="match status" value="1"/>
</dbReference>
<dbReference type="PANTHER" id="PTHR43697:SF1">
    <property type="entry name" value="SERINE--TRNA LIGASE"/>
    <property type="match status" value="1"/>
</dbReference>
<dbReference type="PANTHER" id="PTHR43697">
    <property type="entry name" value="SERYL-TRNA SYNTHETASE"/>
    <property type="match status" value="1"/>
</dbReference>
<dbReference type="Pfam" id="PF02403">
    <property type="entry name" value="Seryl_tRNA_N"/>
    <property type="match status" value="1"/>
</dbReference>
<dbReference type="Pfam" id="PF00587">
    <property type="entry name" value="tRNA-synt_2b"/>
    <property type="match status" value="1"/>
</dbReference>
<dbReference type="PIRSF" id="PIRSF001529">
    <property type="entry name" value="Ser-tRNA-synth_IIa"/>
    <property type="match status" value="1"/>
</dbReference>
<dbReference type="PRINTS" id="PR00981">
    <property type="entry name" value="TRNASYNTHSER"/>
</dbReference>
<dbReference type="SUPFAM" id="SSF55681">
    <property type="entry name" value="Class II aaRS and biotin synthetases"/>
    <property type="match status" value="1"/>
</dbReference>
<dbReference type="SUPFAM" id="SSF46589">
    <property type="entry name" value="tRNA-binding arm"/>
    <property type="match status" value="1"/>
</dbReference>
<dbReference type="PROSITE" id="PS50862">
    <property type="entry name" value="AA_TRNA_LIGASE_II"/>
    <property type="match status" value="1"/>
</dbReference>
<protein>
    <recommendedName>
        <fullName evidence="1">Serine--tRNA ligase</fullName>
        <ecNumber evidence="1">6.1.1.11</ecNumber>
    </recommendedName>
    <alternativeName>
        <fullName evidence="1">Seryl-tRNA synthetase</fullName>
        <shortName evidence="1">SerRS</shortName>
    </alternativeName>
    <alternativeName>
        <fullName evidence="1">Seryl-tRNA(Ser/Sec) synthetase</fullName>
    </alternativeName>
</protein>
<reference key="1">
    <citation type="journal article" date="2007" name="J. Bacteriol.">
        <title>The complete genome sequence of Campylobacter jejuni strain 81116 (NCTC11828).</title>
        <authorList>
            <person name="Pearson B.M."/>
            <person name="Gaskin D.J.H."/>
            <person name="Segers R.P.A.M."/>
            <person name="Wells J.M."/>
            <person name="Nuijten P.J.M."/>
            <person name="van Vliet A.H.M."/>
        </authorList>
    </citation>
    <scope>NUCLEOTIDE SEQUENCE [LARGE SCALE GENOMIC DNA]</scope>
    <source>
        <strain>81116 / NCTC 11828</strain>
    </source>
</reference>
<evidence type="ECO:0000255" key="1">
    <source>
        <dbReference type="HAMAP-Rule" id="MF_00176"/>
    </source>
</evidence>
<proteinExistence type="inferred from homology"/>
<accession>A8FKH6</accession>
<sequence>MLDLKNLQNNFDEVAKKLKNKKVDENILKKLAELFASLKKEKTALEEFQAFQNKFSKELATAEDKESLKAKLSENKSKINEQSVKVNALENELEEIAHAIPNIPDECVPVGEDEDENVELKKVLNPPSFDFTPKEHFELGESLNWLDFVRGVKISQSRFCVLKNEGALLSRALVNYMIDFNRSHGFEFVNVPFLVNGATMFGTGQLPKFKEDMYKVDDEDLYLISTSEIPVTNLYSGEILASETLPIKMTCYSACFRKEAGSAGRDTRGIIRQHQFEKVELVSITKPEQSDSVFNEMLECASDLLSSLGLAHRHLMLCTGDLGFSAAKTVDLEVWLPGQNKYREISSVSNCRDFQARRAKIRYKNEQGKNELVHTLNGSSLAVGRTLVAIMENYQDKEGKIHIPDALKKYF</sequence>
<organism>
    <name type="scientific">Campylobacter jejuni subsp. jejuni serotype O:6 (strain 81116 / NCTC 11828)</name>
    <dbReference type="NCBI Taxonomy" id="407148"/>
    <lineage>
        <taxon>Bacteria</taxon>
        <taxon>Pseudomonadati</taxon>
        <taxon>Campylobacterota</taxon>
        <taxon>Epsilonproteobacteria</taxon>
        <taxon>Campylobacterales</taxon>
        <taxon>Campylobacteraceae</taxon>
        <taxon>Campylobacter</taxon>
    </lineage>
</organism>